<sequence length="67" mass="7947">MPQLDTSTWFITITSMIMTLFILFQLKISNYSYPASPESIELKTQKHSTPWEMKWTKIYLPLLLPPR</sequence>
<reference key="1">
    <citation type="journal article" date="1998" name="J. Mol. Evol.">
        <title>The complete mitochondrial DNA sequence of the pig (Sus scrofa).</title>
        <authorList>
            <person name="Ursing B.M."/>
            <person name="Arnason U."/>
        </authorList>
    </citation>
    <scope>NUCLEOTIDE SEQUENCE [GENOMIC DNA]</scope>
</reference>
<reference key="2">
    <citation type="journal article" date="1998" name="J. Anim. Sci.">
        <title>Rapid communication: nucleotide sequence of porcine and ovine tRNA(Lys) and ATPase8 mitochondrial genes.</title>
        <authorList>
            <person name="Tartaglia M."/>
            <person name="Saulle E."/>
        </authorList>
    </citation>
    <scope>NUCLEOTIDE SEQUENCE [GENOMIC DNA]</scope>
    <source>
        <tissue>Peripheral blood</tissue>
    </source>
</reference>
<reference key="3">
    <citation type="journal article" date="1999" name="Gene">
        <title>Complete nucleotide sequence of pig (Sus scrofa) mitochondrial genome and dating evolutionary divergence within artiodactyla.</title>
        <authorList>
            <person name="Lin C.S."/>
            <person name="Sun Y.L."/>
            <person name="Liu C.Y."/>
            <person name="Yang P.C."/>
            <person name="Chang L.C."/>
            <person name="Cheng I.C."/>
            <person name="Mao S.J.T."/>
            <person name="Huang M.C."/>
        </authorList>
    </citation>
    <scope>NUCLEOTIDE SEQUENCE [LARGE SCALE GENOMIC DNA]</scope>
    <source>
        <strain>Landrace</strain>
    </source>
</reference>
<reference key="4">
    <citation type="journal article" date="1986" name="Biochem. Genet.">
        <title>Pig mitochondrial DNA: polymorphism, restriction map orientation, and sequence data.</title>
        <authorList>
            <person name="Watanabe T."/>
            <person name="Hayashi Y."/>
            <person name="Kimura J."/>
            <person name="Yasuda Y."/>
            <person name="Saitou N."/>
            <person name="Tomita T."/>
            <person name="Ogasawara N."/>
        </authorList>
    </citation>
    <scope>NUCLEOTIDE SEQUENCE [GENOMIC DNA] OF 43-67</scope>
</reference>
<keyword id="KW-0002">3D-structure</keyword>
<keyword id="KW-0007">Acetylation</keyword>
<keyword id="KW-0066">ATP synthesis</keyword>
<keyword id="KW-0138">CF(0)</keyword>
<keyword id="KW-0375">Hydrogen ion transport</keyword>
<keyword id="KW-0406">Ion transport</keyword>
<keyword id="KW-0472">Membrane</keyword>
<keyword id="KW-0496">Mitochondrion</keyword>
<keyword id="KW-1185">Reference proteome</keyword>
<keyword id="KW-0812">Transmembrane</keyword>
<keyword id="KW-1133">Transmembrane helix</keyword>
<keyword id="KW-0813">Transport</keyword>
<name>ATP8_PIG</name>
<organism>
    <name type="scientific">Sus scrofa</name>
    <name type="common">Pig</name>
    <dbReference type="NCBI Taxonomy" id="9823"/>
    <lineage>
        <taxon>Eukaryota</taxon>
        <taxon>Metazoa</taxon>
        <taxon>Chordata</taxon>
        <taxon>Craniata</taxon>
        <taxon>Vertebrata</taxon>
        <taxon>Euteleostomi</taxon>
        <taxon>Mammalia</taxon>
        <taxon>Eutheria</taxon>
        <taxon>Laurasiatheria</taxon>
        <taxon>Artiodactyla</taxon>
        <taxon>Suina</taxon>
        <taxon>Suidae</taxon>
        <taxon>Sus</taxon>
    </lineage>
</organism>
<protein>
    <recommendedName>
        <fullName evidence="1">ATP synthase F(0) complex subunit 8</fullName>
    </recommendedName>
    <alternativeName>
        <fullName>A6L</fullName>
    </alternativeName>
    <alternativeName>
        <fullName>F-ATPase subunit 8</fullName>
    </alternativeName>
</protein>
<evidence type="ECO:0000250" key="1">
    <source>
        <dbReference type="UniProtKB" id="P03928"/>
    </source>
</evidence>
<evidence type="ECO:0000250" key="2">
    <source>
        <dbReference type="UniProtKB" id="P03930"/>
    </source>
</evidence>
<evidence type="ECO:0000250" key="3">
    <source>
        <dbReference type="UniProtKB" id="P19483"/>
    </source>
</evidence>
<evidence type="ECO:0000255" key="4"/>
<evidence type="ECO:0000305" key="5"/>
<evidence type="ECO:0007829" key="6">
    <source>
        <dbReference type="PDB" id="6J5I"/>
    </source>
</evidence>
<gene>
    <name evidence="1" type="primary">MT-ATP8</name>
    <name type="synonym">ATP8</name>
    <name type="synonym">ATPASE8</name>
    <name type="synonym">MTATP8</name>
</gene>
<geneLocation type="mitochondrion"/>
<accession>Q35914</accession>
<accession>O79877</accession>
<accession>O99387</accession>
<comment type="function">
    <text evidence="1 3">Subunit 8, of the mitochondrial membrane ATP synthase complex (F(1)F(0) ATP synthase or Complex V) that produces ATP from ADP in the presence of a proton gradient across the membrane which is generated by electron transport complexes of the respiratory chain. ATP synthase complex consist of a soluble F(1) head domain - the catalytic core - and a membrane F(1) domain - the membrane proton channel. These two domains are linked by a central stalk rotating inside the F(1) region and a stationary peripheral stalk. During catalysis, ATP synthesis in the catalytic domain of F(1) is coupled via a rotary mechanism of the central stalk subunits to proton translocation (By similarity). In vivo, can only synthesize ATP although its ATP hydrolase activity can be activated artificially in vitro (By similarity). Part of the complex F(0) domain (By similarity).</text>
</comment>
<comment type="subunit">
    <text evidence="1">Component of the ATP synthase complex composed at least of ATP5F1A/subunit alpha, ATP5F1B/subunit beta, ATP5MC1/subunit c (homooctomer), MT-ATP6/subunit a, MT-ATP8/subunit 8, ATP5ME/subunit e, ATP5MF/subunit f, ATP5MG/subunit g, ATP5MK/subunit k, ATP5MJ/subunit j, ATP5F1C/subunit gamma, ATP5F1D/subunit delta, ATP5F1E/subunit epsilon, ATP5PF/subunit F6, ATP5PB/subunit b, ATP5PD/subunit d, ATP5PO/subunit OSCP. ATP synthase complex consists of a soluble F(1) head domain (subunits alpha(3) and beta(3)) - the catalytic core - and a membrane F(0) domain - the membrane proton channel (subunits c, a, 8, e, f, g, k and j). These two domains are linked by a central stalk (subunits gamma, delta, and epsilon) rotating inside the F1 region and a stationary peripheral stalk (subunits F6, b, d, and OSCP). Interacts with PRICKLE3.</text>
</comment>
<comment type="subcellular location">
    <subcellularLocation>
        <location>Mitochondrion membrane</location>
        <topology>Single-pass membrane protein</topology>
    </subcellularLocation>
</comment>
<comment type="similarity">
    <text evidence="5">Belongs to the ATPase protein 8 family.</text>
</comment>
<dbReference type="EMBL" id="AJ002189">
    <property type="protein sequence ID" value="CAA05233.1"/>
    <property type="molecule type" value="Genomic_DNA"/>
</dbReference>
<dbReference type="EMBL" id="AF039170">
    <property type="protein sequence ID" value="AAD05064.1"/>
    <property type="molecule type" value="Genomic_DNA"/>
</dbReference>
<dbReference type="EMBL" id="AF034253">
    <property type="protein sequence ID" value="AAD34189.1"/>
    <property type="molecule type" value="Genomic_DNA"/>
</dbReference>
<dbReference type="EMBL" id="M26139">
    <property type="protein sequence ID" value="AAA32030.1"/>
    <property type="molecule type" value="Genomic_DNA"/>
</dbReference>
<dbReference type="PIR" id="T10976">
    <property type="entry name" value="T10976"/>
</dbReference>
<dbReference type="RefSeq" id="NP_008638.1">
    <property type="nucleotide sequence ID" value="NC_000845.1"/>
</dbReference>
<dbReference type="PDB" id="6J54">
    <property type="method" value="EM"/>
    <property type="resolution" value="3.94 A"/>
    <property type="chains" value="8=5-34"/>
</dbReference>
<dbReference type="PDB" id="6J5A">
    <property type="method" value="EM"/>
    <property type="resolution" value="4.35 A"/>
    <property type="chains" value="8=5-34"/>
</dbReference>
<dbReference type="PDB" id="6J5I">
    <property type="method" value="EM"/>
    <property type="resolution" value="3.34 A"/>
    <property type="chains" value="8=1-67"/>
</dbReference>
<dbReference type="PDB" id="6J5J">
    <property type="method" value="EM"/>
    <property type="resolution" value="3.45 A"/>
    <property type="chains" value="8=1-67"/>
</dbReference>
<dbReference type="PDB" id="6J5K">
    <property type="method" value="EM"/>
    <property type="resolution" value="6.20 A"/>
    <property type="chains" value="8/A8/B8/C8=1-67"/>
</dbReference>
<dbReference type="PDB" id="6ZMR">
    <property type="method" value="EM"/>
    <property type="resolution" value="3.94 A"/>
    <property type="chains" value="8=1-67"/>
</dbReference>
<dbReference type="PDB" id="6ZNA">
    <property type="method" value="EM"/>
    <property type="resolution" value="6.20 A"/>
    <property type="chains" value="8/A8/B8/C8=1-67"/>
</dbReference>
<dbReference type="PDBsum" id="6J54"/>
<dbReference type="PDBsum" id="6J5A"/>
<dbReference type="PDBsum" id="6J5I"/>
<dbReference type="PDBsum" id="6J5J"/>
<dbReference type="PDBsum" id="6J5K"/>
<dbReference type="PDBsum" id="6ZMR"/>
<dbReference type="PDBsum" id="6ZNA"/>
<dbReference type="SMR" id="Q35914"/>
<dbReference type="FunCoup" id="Q35914">
    <property type="interactions" value="121"/>
</dbReference>
<dbReference type="IntAct" id="Q35914">
    <property type="interactions" value="1"/>
</dbReference>
<dbReference type="STRING" id="9823.ENSSSCP00000019139"/>
<dbReference type="PaxDb" id="9823-ENSSSCP00000019139"/>
<dbReference type="PeptideAtlas" id="Q35914"/>
<dbReference type="Ensembl" id="ENSSSCT00000019675.1">
    <property type="protein sequence ID" value="ENSSSCP00000019139.1"/>
    <property type="gene ID" value="ENSSSCG00000018080.1"/>
</dbReference>
<dbReference type="Ensembl" id="ENSSSCT00070061677.1">
    <property type="protein sequence ID" value="ENSSSCP00070052582.1"/>
    <property type="gene ID" value="ENSSSCG00070030640.1"/>
</dbReference>
<dbReference type="Ensembl" id="ENSSSCT00085000022">
    <property type="protein sequence ID" value="ENSSSCP00085000006"/>
    <property type="gene ID" value="ENSSSCG00085000022"/>
</dbReference>
<dbReference type="Ensembl" id="ENSSSCT00090000022">
    <property type="protein sequence ID" value="ENSSSCP00090000006"/>
    <property type="gene ID" value="ENSSSCG00090000022"/>
</dbReference>
<dbReference type="Ensembl" id="ENSSSCT00105000022">
    <property type="protein sequence ID" value="ENSSSCP00105000006"/>
    <property type="gene ID" value="ENSSSCG00105000022"/>
</dbReference>
<dbReference type="Ensembl" id="ENSSSCT00110000022">
    <property type="protein sequence ID" value="ENSSSCP00110000006"/>
    <property type="gene ID" value="ENSSSCG00110000022"/>
</dbReference>
<dbReference type="Ensembl" id="ENSSSCT00115000022">
    <property type="protein sequence ID" value="ENSSSCP00115000006"/>
    <property type="gene ID" value="ENSSSCG00115000022"/>
</dbReference>
<dbReference type="Ensembl" id="ENSSSCT00130000022">
    <property type="protein sequence ID" value="ENSSSCP00130000006"/>
    <property type="gene ID" value="ENSSSCG00130000022"/>
</dbReference>
<dbReference type="GeneID" id="808505"/>
<dbReference type="KEGG" id="ssc:808505"/>
<dbReference type="CTD" id="4509"/>
<dbReference type="VGNC" id="VGNC:99789">
    <property type="gene designation" value="MT-ATP8"/>
</dbReference>
<dbReference type="eggNOG" id="ENOG502T21P">
    <property type="taxonomic scope" value="Eukaryota"/>
</dbReference>
<dbReference type="GeneTree" id="ENSGT00390000008771"/>
<dbReference type="HOGENOM" id="CLU_2811757_0_0_1"/>
<dbReference type="InParanoid" id="Q35914"/>
<dbReference type="OMA" id="LDTSTWF"/>
<dbReference type="OrthoDB" id="9835073at2759"/>
<dbReference type="TreeFam" id="TF343854"/>
<dbReference type="Reactome" id="R-SSC-163210">
    <property type="pathway name" value="Formation of ATP by chemiosmotic coupling"/>
</dbReference>
<dbReference type="Reactome" id="R-SSC-8949613">
    <property type="pathway name" value="Cristae formation"/>
</dbReference>
<dbReference type="Proteomes" id="UP000008227">
    <property type="component" value="Mitochondrion"/>
</dbReference>
<dbReference type="Proteomes" id="UP000314985">
    <property type="component" value="Mitochondrion"/>
</dbReference>
<dbReference type="Proteomes" id="UP000694570">
    <property type="component" value="Unplaced"/>
</dbReference>
<dbReference type="Proteomes" id="UP000694571">
    <property type="component" value="Unplaced"/>
</dbReference>
<dbReference type="Proteomes" id="UP000694720">
    <property type="component" value="Unplaced"/>
</dbReference>
<dbReference type="Proteomes" id="UP000694722">
    <property type="component" value="Unplaced"/>
</dbReference>
<dbReference type="Proteomes" id="UP000694723">
    <property type="component" value="Unplaced"/>
</dbReference>
<dbReference type="Proteomes" id="UP000694724">
    <property type="component" value="Unplaced"/>
</dbReference>
<dbReference type="Proteomes" id="UP000694725">
    <property type="component" value="Unplaced"/>
</dbReference>
<dbReference type="Proteomes" id="UP000694726">
    <property type="component" value="Unplaced"/>
</dbReference>
<dbReference type="Proteomes" id="UP000694727">
    <property type="component" value="Unplaced"/>
</dbReference>
<dbReference type="Proteomes" id="UP000694728">
    <property type="component" value="Unplaced"/>
</dbReference>
<dbReference type="Bgee" id="ENSSSCG00000018080">
    <property type="expression patterns" value="Expressed in Ammon's horn and 45 other cell types or tissues"/>
</dbReference>
<dbReference type="ExpressionAtlas" id="Q35914">
    <property type="expression patterns" value="baseline and differential"/>
</dbReference>
<dbReference type="GO" id="GO:0031966">
    <property type="term" value="C:mitochondrial membrane"/>
    <property type="evidence" value="ECO:0007669"/>
    <property type="project" value="UniProtKB-SubCell"/>
</dbReference>
<dbReference type="GO" id="GO:0045259">
    <property type="term" value="C:proton-transporting ATP synthase complex"/>
    <property type="evidence" value="ECO:0000250"/>
    <property type="project" value="UniProtKB"/>
</dbReference>
<dbReference type="GO" id="GO:0015078">
    <property type="term" value="F:proton transmembrane transporter activity"/>
    <property type="evidence" value="ECO:0007669"/>
    <property type="project" value="InterPro"/>
</dbReference>
<dbReference type="GO" id="GO:0015986">
    <property type="term" value="P:proton motive force-driven ATP synthesis"/>
    <property type="evidence" value="ECO:0007669"/>
    <property type="project" value="InterPro"/>
</dbReference>
<dbReference type="InterPro" id="IPR039017">
    <property type="entry name" value="ATP8_mammal"/>
</dbReference>
<dbReference type="InterPro" id="IPR001421">
    <property type="entry name" value="ATP8_metazoa"/>
</dbReference>
<dbReference type="PANTHER" id="PTHR13722">
    <property type="entry name" value="ATP SYNTHASE PROTEIN 8"/>
    <property type="match status" value="1"/>
</dbReference>
<dbReference type="PANTHER" id="PTHR13722:SF0">
    <property type="entry name" value="ATP SYNTHASE PROTEIN 8"/>
    <property type="match status" value="1"/>
</dbReference>
<dbReference type="Pfam" id="PF00895">
    <property type="entry name" value="ATP-synt_8"/>
    <property type="match status" value="1"/>
</dbReference>
<proteinExistence type="evidence at protein level"/>
<feature type="chain" id="PRO_0000195570" description="ATP synthase F(0) complex subunit 8">
    <location>
        <begin position="1"/>
        <end position="67"/>
    </location>
</feature>
<feature type="transmembrane region" description="Helical" evidence="4">
    <location>
        <begin position="8"/>
        <end position="24"/>
    </location>
</feature>
<feature type="modified residue" description="N6-acetyllysine; alternate" evidence="2">
    <location>
        <position position="54"/>
    </location>
</feature>
<feature type="modified residue" description="N6-succinyllysine; alternate" evidence="2">
    <location>
        <position position="54"/>
    </location>
</feature>
<feature type="modified residue" description="N6-acetyllysine" evidence="2">
    <location>
        <position position="57"/>
    </location>
</feature>
<feature type="sequence conflict" description="In Ref. 2; AAD05064." evidence="5" ref="2">
    <original>I</original>
    <variation>T</variation>
    <location>
        <position position="40"/>
    </location>
</feature>
<feature type="sequence conflict" description="In Ref. 4; AAA32030." evidence="5" ref="4">
    <original>Q</original>
    <variation>S</variation>
    <location>
        <position position="45"/>
    </location>
</feature>
<feature type="sequence conflict" description="In Ref. 2; AAD05064." evidence="5" ref="2">
    <original>L</original>
    <variation>S</variation>
    <location>
        <position position="63"/>
    </location>
</feature>
<feature type="sequence conflict" description="In Ref. 2; AAD05064." evidence="5" ref="2">
    <original>P</original>
    <variation>L</variation>
    <location>
        <position position="66"/>
    </location>
</feature>
<feature type="helix" evidence="6">
    <location>
        <begin position="13"/>
        <end position="15"/>
    </location>
</feature>
<feature type="helix" evidence="6">
    <location>
        <begin position="20"/>
        <end position="27"/>
    </location>
</feature>
<feature type="helix" evidence="6">
    <location>
        <begin position="35"/>
        <end position="38"/>
    </location>
</feature>
<feature type="helix" evidence="6">
    <location>
        <begin position="45"/>
        <end position="59"/>
    </location>
</feature>